<reference key="1">
    <citation type="journal article" date="2005" name="Nature">
        <title>Sequencing of Aspergillus nidulans and comparative analysis with A. fumigatus and A. oryzae.</title>
        <authorList>
            <person name="Galagan J.E."/>
            <person name="Calvo S.E."/>
            <person name="Cuomo C."/>
            <person name="Ma L.-J."/>
            <person name="Wortman J.R."/>
            <person name="Batzoglou S."/>
            <person name="Lee S.-I."/>
            <person name="Bastuerkmen M."/>
            <person name="Spevak C.C."/>
            <person name="Clutterbuck J."/>
            <person name="Kapitonov V."/>
            <person name="Jurka J."/>
            <person name="Scazzocchio C."/>
            <person name="Farman M.L."/>
            <person name="Butler J."/>
            <person name="Purcell S."/>
            <person name="Harris S."/>
            <person name="Braus G.H."/>
            <person name="Draht O."/>
            <person name="Busch S."/>
            <person name="D'Enfert C."/>
            <person name="Bouchier C."/>
            <person name="Goldman G.H."/>
            <person name="Bell-Pedersen D."/>
            <person name="Griffiths-Jones S."/>
            <person name="Doonan J.H."/>
            <person name="Yu J."/>
            <person name="Vienken K."/>
            <person name="Pain A."/>
            <person name="Freitag M."/>
            <person name="Selker E.U."/>
            <person name="Archer D.B."/>
            <person name="Penalva M.A."/>
            <person name="Oakley B.R."/>
            <person name="Momany M."/>
            <person name="Tanaka T."/>
            <person name="Kumagai T."/>
            <person name="Asai K."/>
            <person name="Machida M."/>
            <person name="Nierman W.C."/>
            <person name="Denning D.W."/>
            <person name="Caddick M.X."/>
            <person name="Hynes M."/>
            <person name="Paoletti M."/>
            <person name="Fischer R."/>
            <person name="Miller B.L."/>
            <person name="Dyer P.S."/>
            <person name="Sachs M.S."/>
            <person name="Osmani S.A."/>
            <person name="Birren B.W."/>
        </authorList>
    </citation>
    <scope>NUCLEOTIDE SEQUENCE [LARGE SCALE GENOMIC DNA]</scope>
    <source>
        <strain>FGSC A4 / ATCC 38163 / CBS 112.46 / NRRL 194 / M139</strain>
    </source>
</reference>
<reference key="2">
    <citation type="journal article" date="2009" name="Fungal Genet. Biol.">
        <title>The 2008 update of the Aspergillus nidulans genome annotation: a community effort.</title>
        <authorList>
            <person name="Wortman J.R."/>
            <person name="Gilsenan J.M."/>
            <person name="Joardar V."/>
            <person name="Deegan J."/>
            <person name="Clutterbuck J."/>
            <person name="Andersen M.R."/>
            <person name="Archer D."/>
            <person name="Bencina M."/>
            <person name="Braus G."/>
            <person name="Coutinho P."/>
            <person name="von Dohren H."/>
            <person name="Doonan J."/>
            <person name="Driessen A.J."/>
            <person name="Durek P."/>
            <person name="Espeso E."/>
            <person name="Fekete E."/>
            <person name="Flipphi M."/>
            <person name="Estrada C.G."/>
            <person name="Geysens S."/>
            <person name="Goldman G."/>
            <person name="de Groot P.W."/>
            <person name="Hansen K."/>
            <person name="Harris S.D."/>
            <person name="Heinekamp T."/>
            <person name="Helmstaedt K."/>
            <person name="Henrissat B."/>
            <person name="Hofmann G."/>
            <person name="Homan T."/>
            <person name="Horio T."/>
            <person name="Horiuchi H."/>
            <person name="James S."/>
            <person name="Jones M."/>
            <person name="Karaffa L."/>
            <person name="Karanyi Z."/>
            <person name="Kato M."/>
            <person name="Keller N."/>
            <person name="Kelly D.E."/>
            <person name="Kiel J.A."/>
            <person name="Kim J.M."/>
            <person name="van der Klei I.J."/>
            <person name="Klis F.M."/>
            <person name="Kovalchuk A."/>
            <person name="Krasevec N."/>
            <person name="Kubicek C.P."/>
            <person name="Liu B."/>
            <person name="Maccabe A."/>
            <person name="Meyer V."/>
            <person name="Mirabito P."/>
            <person name="Miskei M."/>
            <person name="Mos M."/>
            <person name="Mullins J."/>
            <person name="Nelson D.R."/>
            <person name="Nielsen J."/>
            <person name="Oakley B.R."/>
            <person name="Osmani S.A."/>
            <person name="Pakula T."/>
            <person name="Paszewski A."/>
            <person name="Paulsen I."/>
            <person name="Pilsyk S."/>
            <person name="Pocsi I."/>
            <person name="Punt P.J."/>
            <person name="Ram A.F."/>
            <person name="Ren Q."/>
            <person name="Robellet X."/>
            <person name="Robson G."/>
            <person name="Seiboth B."/>
            <person name="van Solingen P."/>
            <person name="Specht T."/>
            <person name="Sun J."/>
            <person name="Taheri-Talesh N."/>
            <person name="Takeshita N."/>
            <person name="Ussery D."/>
            <person name="vanKuyk P.A."/>
            <person name="Visser H."/>
            <person name="van de Vondervoort P.J."/>
            <person name="de Vries R.P."/>
            <person name="Walton J."/>
            <person name="Xiang X."/>
            <person name="Xiong Y."/>
            <person name="Zeng A.P."/>
            <person name="Brandt B.W."/>
            <person name="Cornell M.J."/>
            <person name="van den Hondel C.A."/>
            <person name="Visser J."/>
            <person name="Oliver S.G."/>
            <person name="Turner G."/>
        </authorList>
    </citation>
    <scope>GENOME REANNOTATION</scope>
    <source>
        <strain>FGSC A4 / ATCC 38163 / CBS 112.46 / NRRL 194 / M139</strain>
    </source>
</reference>
<feature type="chain" id="PRO_0000377588" description="Vacuolar ATPase assembly integral membrane protein vma21">
    <location>
        <begin position="1"/>
        <end position="111"/>
    </location>
</feature>
<feature type="topological domain" description="Cytoplasmic" evidence="1">
    <location>
        <begin position="1"/>
        <end position="43"/>
    </location>
</feature>
<feature type="transmembrane region" description="Helical" evidence="1">
    <location>
        <begin position="44"/>
        <end position="64"/>
    </location>
</feature>
<feature type="topological domain" description="Lumenal" evidence="1">
    <location>
        <begin position="65"/>
        <end position="69"/>
    </location>
</feature>
<feature type="transmembrane region" description="Helical" evidence="1">
    <location>
        <begin position="70"/>
        <end position="90"/>
    </location>
</feature>
<feature type="topological domain" description="Cytoplasmic" evidence="1">
    <location>
        <begin position="91"/>
        <end position="111"/>
    </location>
</feature>
<feature type="region of interest" description="Disordered" evidence="2">
    <location>
        <begin position="1"/>
        <end position="32"/>
    </location>
</feature>
<feature type="compositionally biased region" description="Polar residues" evidence="2">
    <location>
        <begin position="20"/>
        <end position="32"/>
    </location>
</feature>
<comment type="function">
    <text evidence="1">Required for the assembly of the V0 complex of the vacuolar ATPase (V-ATPase) in the endoplasmic reticulum.</text>
</comment>
<comment type="subcellular location">
    <subcellularLocation>
        <location evidence="1">Endoplasmic reticulum membrane</location>
        <topology evidence="1">Multi-pass membrane protein</topology>
    </subcellularLocation>
    <subcellularLocation>
        <location evidence="1">Endoplasmic reticulum-Golgi intermediate compartment membrane</location>
        <topology evidence="1">Multi-pass membrane protein</topology>
    </subcellularLocation>
    <subcellularLocation>
        <location evidence="1">Cytoplasmic vesicle</location>
        <location evidence="1">COPII-coated vesicle membrane</location>
        <topology evidence="1">Multi-pass membrane protein</topology>
    </subcellularLocation>
</comment>
<comment type="similarity">
    <text evidence="1">Belongs to the VMA21 family.</text>
</comment>
<comment type="sequence caution" evidence="3">
    <conflict type="erroneous gene model prediction">
        <sequence resource="EMBL-CDS" id="EAA63546"/>
    </conflict>
</comment>
<evidence type="ECO:0000255" key="1">
    <source>
        <dbReference type="HAMAP-Rule" id="MF_03058"/>
    </source>
</evidence>
<evidence type="ECO:0000256" key="2">
    <source>
        <dbReference type="SAM" id="MobiDB-lite"/>
    </source>
</evidence>
<evidence type="ECO:0000305" key="3"/>
<keyword id="KW-0968">Cytoplasmic vesicle</keyword>
<keyword id="KW-0256">Endoplasmic reticulum</keyword>
<keyword id="KW-0472">Membrane</keyword>
<keyword id="KW-1185">Reference proteome</keyword>
<keyword id="KW-0812">Transmembrane</keyword>
<keyword id="KW-1133">Transmembrane helix</keyword>
<organism>
    <name type="scientific">Emericella nidulans (strain FGSC A4 / ATCC 38163 / CBS 112.46 / NRRL 194 / M139)</name>
    <name type="common">Aspergillus nidulans</name>
    <dbReference type="NCBI Taxonomy" id="227321"/>
    <lineage>
        <taxon>Eukaryota</taxon>
        <taxon>Fungi</taxon>
        <taxon>Dikarya</taxon>
        <taxon>Ascomycota</taxon>
        <taxon>Pezizomycotina</taxon>
        <taxon>Eurotiomycetes</taxon>
        <taxon>Eurotiomycetidae</taxon>
        <taxon>Eurotiales</taxon>
        <taxon>Aspergillaceae</taxon>
        <taxon>Aspergillus</taxon>
        <taxon>Aspergillus subgen. Nidulantes</taxon>
    </lineage>
</organism>
<protein>
    <recommendedName>
        <fullName evidence="1">Vacuolar ATPase assembly integral membrane protein vma21</fullName>
    </recommendedName>
</protein>
<accession>Q5B905</accession>
<accession>C8VIZ9</accession>
<name>VMA21_EMENI</name>
<sequence length="111" mass="11845">MATRRPGKSYADAAVPGSTPGETPSELSSDTSPAVPMHVIYKLIGFTIAMITTPVGMYFVSVTFGASTTVAGIIAAVMANIILFLYIYVAWQEDKEEREADAARRKGAKAQ</sequence>
<dbReference type="EMBL" id="AACD01000051">
    <property type="protein sequence ID" value="EAA63546.1"/>
    <property type="status" value="ALT_SEQ"/>
    <property type="molecule type" value="Genomic_DNA"/>
</dbReference>
<dbReference type="EMBL" id="BN001306">
    <property type="protein sequence ID" value="CBF83635.1"/>
    <property type="molecule type" value="Genomic_DNA"/>
</dbReference>
<dbReference type="RefSeq" id="XP_660579.1">
    <property type="nucleotide sequence ID" value="XM_655487.1"/>
</dbReference>
<dbReference type="SMR" id="Q5B905"/>
<dbReference type="FunCoup" id="Q5B905">
    <property type="interactions" value="52"/>
</dbReference>
<dbReference type="STRING" id="227321.Q5B905"/>
<dbReference type="EnsemblFungi" id="CBF83635">
    <property type="protein sequence ID" value="CBF83635"/>
    <property type="gene ID" value="ANIA_02975"/>
</dbReference>
<dbReference type="KEGG" id="ani:ANIA_02975"/>
<dbReference type="VEuPathDB" id="FungiDB:AN2975"/>
<dbReference type="eggNOG" id="ENOG502SBNA">
    <property type="taxonomic scope" value="Eukaryota"/>
</dbReference>
<dbReference type="HOGENOM" id="CLU_154717_1_1_1"/>
<dbReference type="InParanoid" id="Q5B905"/>
<dbReference type="OMA" id="AMKEDQT"/>
<dbReference type="OrthoDB" id="160405at2759"/>
<dbReference type="Proteomes" id="UP000000560">
    <property type="component" value="Chromosome VI"/>
</dbReference>
<dbReference type="GO" id="GO:0005789">
    <property type="term" value="C:endoplasmic reticulum membrane"/>
    <property type="evidence" value="ECO:0000318"/>
    <property type="project" value="GO_Central"/>
</dbReference>
<dbReference type="GO" id="GO:0033116">
    <property type="term" value="C:endoplasmic reticulum-Golgi intermediate compartment membrane"/>
    <property type="evidence" value="ECO:0007669"/>
    <property type="project" value="UniProtKB-SubCell"/>
</dbReference>
<dbReference type="GO" id="GO:0012507">
    <property type="term" value="C:ER to Golgi transport vesicle membrane"/>
    <property type="evidence" value="ECO:0007669"/>
    <property type="project" value="UniProtKB-SubCell"/>
</dbReference>
<dbReference type="GO" id="GO:0070072">
    <property type="term" value="P:vacuolar proton-transporting V-type ATPase complex assembly"/>
    <property type="evidence" value="ECO:0000318"/>
    <property type="project" value="GO_Central"/>
</dbReference>
<dbReference type="HAMAP" id="MF_03058">
    <property type="entry name" value="VMA21"/>
    <property type="match status" value="1"/>
</dbReference>
<dbReference type="InterPro" id="IPR019013">
    <property type="entry name" value="Vma21"/>
</dbReference>
<dbReference type="PANTHER" id="PTHR31792">
    <property type="entry name" value="VACUOLAR ATPASE ASSEMBLY INTEGRAL MEMBRANE PROTEIN VMA21"/>
    <property type="match status" value="1"/>
</dbReference>
<dbReference type="PANTHER" id="PTHR31792:SF3">
    <property type="entry name" value="VACUOLAR ATPASE ASSEMBLY INTEGRAL MEMBRANE PROTEIN VMA21"/>
    <property type="match status" value="1"/>
</dbReference>
<dbReference type="Pfam" id="PF09446">
    <property type="entry name" value="VMA21"/>
    <property type="match status" value="1"/>
</dbReference>
<proteinExistence type="inferred from homology"/>
<gene>
    <name type="primary">vma21</name>
    <name type="ORF">AN2975</name>
</gene>